<keyword id="KW-0479">Metal-binding</keyword>
<keyword id="KW-0521">NADP</keyword>
<keyword id="KW-0560">Oxidoreductase</keyword>
<keyword id="KW-0630">Potassium</keyword>
<keyword id="KW-1185">Reference proteome</keyword>
<proteinExistence type="inferred from homology"/>
<reference key="1">
    <citation type="journal article" date="2005" name="Science">
        <title>Life at depth: Photobacterium profundum genome sequence and expression analysis.</title>
        <authorList>
            <person name="Vezzi A."/>
            <person name="Campanaro S."/>
            <person name="D'Angelo M."/>
            <person name="Simonato F."/>
            <person name="Vitulo N."/>
            <person name="Lauro F.M."/>
            <person name="Cestaro A."/>
            <person name="Malacrida G."/>
            <person name="Simionati B."/>
            <person name="Cannata N."/>
            <person name="Romualdi C."/>
            <person name="Bartlett D.H."/>
            <person name="Valle G."/>
        </authorList>
    </citation>
    <scope>NUCLEOTIDE SEQUENCE [LARGE SCALE GENOMIC DNA]</scope>
    <source>
        <strain>ATCC BAA-1253 / SS9</strain>
    </source>
</reference>
<comment type="function">
    <text evidence="1">Catalyzes the irreversible NADPH-dependent deamination of GMP to IMP. It functions in the conversion of nucleobase, nucleoside and nucleotide derivatives of G to A nucleotides, and in maintaining the intracellular balance of A and G nucleotides.</text>
</comment>
<comment type="catalytic activity">
    <reaction evidence="1">
        <text>IMP + NH4(+) + NADP(+) = GMP + NADPH + 2 H(+)</text>
        <dbReference type="Rhea" id="RHEA:17185"/>
        <dbReference type="ChEBI" id="CHEBI:15378"/>
        <dbReference type="ChEBI" id="CHEBI:28938"/>
        <dbReference type="ChEBI" id="CHEBI:57783"/>
        <dbReference type="ChEBI" id="CHEBI:58053"/>
        <dbReference type="ChEBI" id="CHEBI:58115"/>
        <dbReference type="ChEBI" id="CHEBI:58349"/>
        <dbReference type="EC" id="1.7.1.7"/>
    </reaction>
</comment>
<comment type="subunit">
    <text evidence="1">Homotetramer.</text>
</comment>
<comment type="similarity">
    <text evidence="1">Belongs to the IMPDH/GMPR family. GuaC type 1 subfamily.</text>
</comment>
<gene>
    <name evidence="1" type="primary">guaC</name>
    <name type="ordered locus">PBPRB1716</name>
</gene>
<sequence>MRIEQDLKLGFKDVLFRPKRSTLKSRSQVELTRDFTFKHSGRQWSGVPIIAANMDSVGSFEMAASLSKHNVMTAIHKHYTVDDWAGFVKNNDAAVLNNAMVSTGTSEADFQKTKDIMALTEDLIFICIDIANGYSEHLVEYVQKVRAEFPTKVISAGNVVTGDMVEELILAGADIVKVGIGPGSVCTTRVKTGVGYPQLSAIIECSDAAHGLGGRIIGDGGCSCAGDVSKAFGGGADFVMLGGMLAGHEESNGEVIEKDGEMFMKFYGMSSQSAMDKHSGGVANYRAAEGKTVLLPFRGPVENTIQDIMGGIRSTCTYVGAAQLKELTKRATFIRVQEQENNVYGKE</sequence>
<feature type="chain" id="PRO_1000025615" description="GMP reductase">
    <location>
        <begin position="1"/>
        <end position="347"/>
    </location>
</feature>
<feature type="active site" description="Thioimidate intermediate" evidence="1">
    <location>
        <position position="186"/>
    </location>
</feature>
<feature type="binding site" evidence="1">
    <location>
        <begin position="108"/>
        <end position="131"/>
    </location>
    <ligand>
        <name>NADP(+)</name>
        <dbReference type="ChEBI" id="CHEBI:58349"/>
    </ligand>
</feature>
<feature type="binding site" evidence="1">
    <location>
        <position position="181"/>
    </location>
    <ligand>
        <name>K(+)</name>
        <dbReference type="ChEBI" id="CHEBI:29103"/>
    </ligand>
</feature>
<feature type="binding site" evidence="1">
    <location>
        <position position="183"/>
    </location>
    <ligand>
        <name>K(+)</name>
        <dbReference type="ChEBI" id="CHEBI:29103"/>
    </ligand>
</feature>
<feature type="binding site" evidence="1">
    <location>
        <begin position="216"/>
        <end position="239"/>
    </location>
    <ligand>
        <name>NADP(+)</name>
        <dbReference type="ChEBI" id="CHEBI:58349"/>
    </ligand>
</feature>
<evidence type="ECO:0000255" key="1">
    <source>
        <dbReference type="HAMAP-Rule" id="MF_00596"/>
    </source>
</evidence>
<protein>
    <recommendedName>
        <fullName evidence="1">GMP reductase</fullName>
        <ecNumber evidence="1">1.7.1.7</ecNumber>
    </recommendedName>
    <alternativeName>
        <fullName evidence="1">Guanosine 5'-monophosphate oxidoreductase</fullName>
        <shortName evidence="1">Guanosine monophosphate reductase</shortName>
    </alternativeName>
</protein>
<accession>Q6LGK4</accession>
<name>GUAC_PHOPR</name>
<dbReference type="EC" id="1.7.1.7" evidence="1"/>
<dbReference type="EMBL" id="CR378680">
    <property type="protein sequence ID" value="CAG23576.1"/>
    <property type="molecule type" value="Genomic_DNA"/>
</dbReference>
<dbReference type="RefSeq" id="WP_011221726.1">
    <property type="nucleotide sequence ID" value="NC_006371.1"/>
</dbReference>
<dbReference type="SMR" id="Q6LGK4"/>
<dbReference type="STRING" id="298386.PBPRB1716"/>
<dbReference type="KEGG" id="ppr:PBPRB1716"/>
<dbReference type="eggNOG" id="COG0516">
    <property type="taxonomic scope" value="Bacteria"/>
</dbReference>
<dbReference type="HOGENOM" id="CLU_022552_5_3_6"/>
<dbReference type="Proteomes" id="UP000000593">
    <property type="component" value="Chromosome 2"/>
</dbReference>
<dbReference type="GO" id="GO:0005829">
    <property type="term" value="C:cytosol"/>
    <property type="evidence" value="ECO:0007669"/>
    <property type="project" value="TreeGrafter"/>
</dbReference>
<dbReference type="GO" id="GO:1902560">
    <property type="term" value="C:GMP reductase complex"/>
    <property type="evidence" value="ECO:0007669"/>
    <property type="project" value="InterPro"/>
</dbReference>
<dbReference type="GO" id="GO:0003920">
    <property type="term" value="F:GMP reductase activity"/>
    <property type="evidence" value="ECO:0007669"/>
    <property type="project" value="UniProtKB-UniRule"/>
</dbReference>
<dbReference type="GO" id="GO:0046872">
    <property type="term" value="F:metal ion binding"/>
    <property type="evidence" value="ECO:0007669"/>
    <property type="project" value="UniProtKB-KW"/>
</dbReference>
<dbReference type="GO" id="GO:0006163">
    <property type="term" value="P:purine nucleotide metabolic process"/>
    <property type="evidence" value="ECO:0007669"/>
    <property type="project" value="UniProtKB-UniRule"/>
</dbReference>
<dbReference type="CDD" id="cd00381">
    <property type="entry name" value="IMPDH"/>
    <property type="match status" value="1"/>
</dbReference>
<dbReference type="FunFam" id="3.20.20.70:FF:000012">
    <property type="entry name" value="GMP reductase"/>
    <property type="match status" value="1"/>
</dbReference>
<dbReference type="Gene3D" id="3.20.20.70">
    <property type="entry name" value="Aldolase class I"/>
    <property type="match status" value="1"/>
</dbReference>
<dbReference type="HAMAP" id="MF_00596">
    <property type="entry name" value="GMP_reduct_type1"/>
    <property type="match status" value="1"/>
</dbReference>
<dbReference type="InterPro" id="IPR013785">
    <property type="entry name" value="Aldolase_TIM"/>
</dbReference>
<dbReference type="InterPro" id="IPR050139">
    <property type="entry name" value="GMP_reductase"/>
</dbReference>
<dbReference type="InterPro" id="IPR005993">
    <property type="entry name" value="GMPR"/>
</dbReference>
<dbReference type="InterPro" id="IPR015875">
    <property type="entry name" value="IMP_DH/GMP_Rdtase_CS"/>
</dbReference>
<dbReference type="InterPro" id="IPR001093">
    <property type="entry name" value="IMP_DH_GMPRt"/>
</dbReference>
<dbReference type="NCBIfam" id="TIGR01305">
    <property type="entry name" value="GMP_reduct_1"/>
    <property type="match status" value="1"/>
</dbReference>
<dbReference type="NCBIfam" id="NF003470">
    <property type="entry name" value="PRK05096.1"/>
    <property type="match status" value="1"/>
</dbReference>
<dbReference type="PANTHER" id="PTHR43170">
    <property type="entry name" value="GMP REDUCTASE"/>
    <property type="match status" value="1"/>
</dbReference>
<dbReference type="PANTHER" id="PTHR43170:SF5">
    <property type="entry name" value="GMP REDUCTASE"/>
    <property type="match status" value="1"/>
</dbReference>
<dbReference type="Pfam" id="PF00478">
    <property type="entry name" value="IMPDH"/>
    <property type="match status" value="1"/>
</dbReference>
<dbReference type="PIRSF" id="PIRSF000235">
    <property type="entry name" value="GMP_reductase"/>
    <property type="match status" value="1"/>
</dbReference>
<dbReference type="SMART" id="SM01240">
    <property type="entry name" value="IMPDH"/>
    <property type="match status" value="1"/>
</dbReference>
<dbReference type="SUPFAM" id="SSF51412">
    <property type="entry name" value="Inosine monophosphate dehydrogenase (IMPDH)"/>
    <property type="match status" value="1"/>
</dbReference>
<dbReference type="PROSITE" id="PS00487">
    <property type="entry name" value="IMP_DH_GMP_RED"/>
    <property type="match status" value="1"/>
</dbReference>
<organism>
    <name type="scientific">Photobacterium profundum (strain SS9)</name>
    <dbReference type="NCBI Taxonomy" id="298386"/>
    <lineage>
        <taxon>Bacteria</taxon>
        <taxon>Pseudomonadati</taxon>
        <taxon>Pseudomonadota</taxon>
        <taxon>Gammaproteobacteria</taxon>
        <taxon>Vibrionales</taxon>
        <taxon>Vibrionaceae</taxon>
        <taxon>Photobacterium</taxon>
    </lineage>
</organism>